<gene>
    <name evidence="1" type="primary">alaS</name>
    <name type="ordered locus">PF0270</name>
</gene>
<keyword id="KW-0030">Aminoacyl-tRNA synthetase</keyword>
<keyword id="KW-0067">ATP-binding</keyword>
<keyword id="KW-0963">Cytoplasm</keyword>
<keyword id="KW-0436">Ligase</keyword>
<keyword id="KW-0479">Metal-binding</keyword>
<keyword id="KW-0547">Nucleotide-binding</keyword>
<keyword id="KW-0648">Protein biosynthesis</keyword>
<keyword id="KW-1185">Reference proteome</keyword>
<keyword id="KW-0694">RNA-binding</keyword>
<keyword id="KW-0820">tRNA-binding</keyword>
<keyword id="KW-0862">Zinc</keyword>
<protein>
    <recommendedName>
        <fullName evidence="1">Alanine--tRNA ligase</fullName>
        <ecNumber evidence="1">6.1.1.7</ecNumber>
    </recommendedName>
    <alternativeName>
        <fullName evidence="1">Alanyl-tRNA synthetase</fullName>
        <shortName evidence="1">AlaRS</shortName>
    </alternativeName>
</protein>
<comment type="function">
    <text evidence="1">Catalyzes the attachment of alanine to tRNA(Ala) in a two-step reaction: alanine is first activated by ATP to form Ala-AMP and then transferred to the acceptor end of tRNA(Ala). Also edits incorrectly charged Ser-tRNA(Ala) and Gly-tRNA(Ala) via its editing domain.</text>
</comment>
<comment type="catalytic activity">
    <reaction evidence="1">
        <text>tRNA(Ala) + L-alanine + ATP = L-alanyl-tRNA(Ala) + AMP + diphosphate</text>
        <dbReference type="Rhea" id="RHEA:12540"/>
        <dbReference type="Rhea" id="RHEA-COMP:9657"/>
        <dbReference type="Rhea" id="RHEA-COMP:9923"/>
        <dbReference type="ChEBI" id="CHEBI:30616"/>
        <dbReference type="ChEBI" id="CHEBI:33019"/>
        <dbReference type="ChEBI" id="CHEBI:57972"/>
        <dbReference type="ChEBI" id="CHEBI:78442"/>
        <dbReference type="ChEBI" id="CHEBI:78497"/>
        <dbReference type="ChEBI" id="CHEBI:456215"/>
        <dbReference type="EC" id="6.1.1.7"/>
    </reaction>
</comment>
<comment type="cofactor">
    <cofactor evidence="1">
        <name>Zn(2+)</name>
        <dbReference type="ChEBI" id="CHEBI:29105"/>
    </cofactor>
    <text evidence="1">Binds 1 zinc ion per subunit.</text>
</comment>
<comment type="subcellular location">
    <subcellularLocation>
        <location evidence="1">Cytoplasm</location>
    </subcellularLocation>
</comment>
<comment type="domain">
    <text evidence="1">Consists of three domains; the N-terminal catalytic domain, the editing domain and the C-terminal C-Ala domain. The editing domain removes incorrectly charged amino acids, while the C-Ala domain, along with tRNA(Ala), serves as a bridge to cooperatively bring together the editing and aminoacylation centers thus stimulating deacylation of misacylated tRNAs.</text>
</comment>
<comment type="similarity">
    <text evidence="1">Belongs to the class-II aminoacyl-tRNA synthetase family.</text>
</comment>
<sequence>MEFVMKTRMFEEEGWIRKTCKVCGKPFWTLDPDRETCGDPPCDEYQFIGKPGIPKKYTLDEMREKFLSFFEKHEVYPHGRVKRYPVLPRWRDDVLLVGASIMDFQPWVISGEADPPANPLTISQPSIRFTDIDNVGITGRHFTIFEMMAHHAFNYPGKHIYWIDETVELAFEFFTKELKMKPEDITFKENPWAGGGNAGPAFEVLYKGLEVATLVFMQYKKAPANADPSQVVIIKGEKYVPMETKVVDTGYGLERLVWMSQGTPTAYDAVLGYVIEPLKRMAGVEKIDERILMENSRLAGMFDIEDMGDLRYLREQVAKRVGISVEELERLIRPYELIYAIADHTKALTFMLADGVVPSNVKAGYLARLLIRKSIRHLRELGLEVPLAEIVAMHIKELSPTFPEFKEMEDIILEMIELEEKKYAETLRRGSDLVKREIAKLKKKGANEIPLEKLITFYESHGLTPEIVKEIAEKEGVKVHIPDNFYSLVAKEAEKQVEEKEEEVVDFELVKDLPDTRTLYYEDPFMKEFDAKVLKVIEDWVVLDQTAFYPEGGGQPYDTGILVVDGEEVKVTNVQKVGKVILHKVERPELFKEGTIVHGRIDWERRIQHMRHHTGTHVLMGALVRVLGKHVWQAGSQLSTDWARLDITHYKRISDEEIKEIERLANRVVMENRRVRWEWLPRTEADEKYGFRLYQGGVVPGRIIRILNIEDWDVQACGGTHLPSTGLIGPIKILRTERIQDGVERIIFACGEAAVREWQKEREIIKRTSQILRVPPEKLPETAERFFNEWKEARKEVEKLRKELAKLLVYELESKVEKVGEIEFIGEIVEGSMDDLREAANKLRKENRVVVLVNKEGHFVVAVGDKLPYTAGEFAKLITSVAGGGGGGRKELAQGKIRDIEKAKEAIEKVKGSL</sequence>
<feature type="chain" id="PRO_0000075273" description="Alanine--tRNA ligase">
    <location>
        <begin position="1"/>
        <end position="914"/>
    </location>
</feature>
<feature type="binding site" evidence="1">
    <location>
        <position position="613"/>
    </location>
    <ligand>
        <name>Zn(2+)</name>
        <dbReference type="ChEBI" id="CHEBI:29105"/>
    </ligand>
</feature>
<feature type="binding site" evidence="1">
    <location>
        <position position="617"/>
    </location>
    <ligand>
        <name>Zn(2+)</name>
        <dbReference type="ChEBI" id="CHEBI:29105"/>
    </ligand>
</feature>
<feature type="binding site" evidence="1">
    <location>
        <position position="717"/>
    </location>
    <ligand>
        <name>Zn(2+)</name>
        <dbReference type="ChEBI" id="CHEBI:29105"/>
    </ligand>
</feature>
<feature type="binding site" evidence="1">
    <location>
        <position position="721"/>
    </location>
    <ligand>
        <name>Zn(2+)</name>
        <dbReference type="ChEBI" id="CHEBI:29105"/>
    </ligand>
</feature>
<name>SYA_PYRFU</name>
<organism>
    <name type="scientific">Pyrococcus furiosus (strain ATCC 43587 / DSM 3638 / JCM 8422 / Vc1)</name>
    <dbReference type="NCBI Taxonomy" id="186497"/>
    <lineage>
        <taxon>Archaea</taxon>
        <taxon>Methanobacteriati</taxon>
        <taxon>Methanobacteriota</taxon>
        <taxon>Thermococci</taxon>
        <taxon>Thermococcales</taxon>
        <taxon>Thermococcaceae</taxon>
        <taxon>Pyrococcus</taxon>
    </lineage>
</organism>
<evidence type="ECO:0000255" key="1">
    <source>
        <dbReference type="HAMAP-Rule" id="MF_00036"/>
    </source>
</evidence>
<dbReference type="EC" id="6.1.1.7" evidence="1"/>
<dbReference type="EMBL" id="AE009950">
    <property type="protein sequence ID" value="AAL80394.1"/>
    <property type="molecule type" value="Genomic_DNA"/>
</dbReference>
<dbReference type="RefSeq" id="WP_011011385.1">
    <property type="nucleotide sequence ID" value="NC_003413.1"/>
</dbReference>
<dbReference type="SMR" id="Q8U425"/>
<dbReference type="STRING" id="186497.PF0270"/>
<dbReference type="PaxDb" id="186497-PF0270"/>
<dbReference type="GeneID" id="1468104"/>
<dbReference type="KEGG" id="pfu:PF0270"/>
<dbReference type="PATRIC" id="fig|186497.12.peg.282"/>
<dbReference type="eggNOG" id="arCOG01255">
    <property type="taxonomic scope" value="Archaea"/>
</dbReference>
<dbReference type="HOGENOM" id="CLU_004485_4_0_2"/>
<dbReference type="OrthoDB" id="7506at2157"/>
<dbReference type="PhylomeDB" id="Q8U425"/>
<dbReference type="Proteomes" id="UP000001013">
    <property type="component" value="Chromosome"/>
</dbReference>
<dbReference type="GO" id="GO:0005737">
    <property type="term" value="C:cytoplasm"/>
    <property type="evidence" value="ECO:0007669"/>
    <property type="project" value="UniProtKB-SubCell"/>
</dbReference>
<dbReference type="GO" id="GO:0004813">
    <property type="term" value="F:alanine-tRNA ligase activity"/>
    <property type="evidence" value="ECO:0007669"/>
    <property type="project" value="UniProtKB-UniRule"/>
</dbReference>
<dbReference type="GO" id="GO:0002161">
    <property type="term" value="F:aminoacyl-tRNA deacylase activity"/>
    <property type="evidence" value="ECO:0007669"/>
    <property type="project" value="UniProtKB-ARBA"/>
</dbReference>
<dbReference type="GO" id="GO:0005524">
    <property type="term" value="F:ATP binding"/>
    <property type="evidence" value="ECO:0007669"/>
    <property type="project" value="UniProtKB-UniRule"/>
</dbReference>
<dbReference type="GO" id="GO:0000049">
    <property type="term" value="F:tRNA binding"/>
    <property type="evidence" value="ECO:0007669"/>
    <property type="project" value="UniProtKB-KW"/>
</dbReference>
<dbReference type="GO" id="GO:0008270">
    <property type="term" value="F:zinc ion binding"/>
    <property type="evidence" value="ECO:0007669"/>
    <property type="project" value="UniProtKB-UniRule"/>
</dbReference>
<dbReference type="GO" id="GO:0006419">
    <property type="term" value="P:alanyl-tRNA aminoacylation"/>
    <property type="evidence" value="ECO:0007669"/>
    <property type="project" value="UniProtKB-UniRule"/>
</dbReference>
<dbReference type="CDD" id="cd00673">
    <property type="entry name" value="AlaRS_core"/>
    <property type="match status" value="1"/>
</dbReference>
<dbReference type="FunFam" id="2.40.30.130:FF:000010">
    <property type="entry name" value="Alanine--tRNA ligase"/>
    <property type="match status" value="1"/>
</dbReference>
<dbReference type="FunFam" id="3.10.310.40:FF:000001">
    <property type="entry name" value="Alanine--tRNA ligase"/>
    <property type="match status" value="1"/>
</dbReference>
<dbReference type="FunFam" id="3.30.54.20:FF:000005">
    <property type="entry name" value="Alanine--tRNA ligase"/>
    <property type="match status" value="1"/>
</dbReference>
<dbReference type="FunFam" id="3.30.930.10:FF:000056">
    <property type="entry name" value="Alanine--tRNA ligase"/>
    <property type="match status" value="1"/>
</dbReference>
<dbReference type="FunFam" id="3.30.980.10:FF:000002">
    <property type="entry name" value="Alanine--tRNA ligase"/>
    <property type="match status" value="1"/>
</dbReference>
<dbReference type="Gene3D" id="2.40.30.130">
    <property type="match status" value="1"/>
</dbReference>
<dbReference type="Gene3D" id="3.10.310.40">
    <property type="match status" value="1"/>
</dbReference>
<dbReference type="Gene3D" id="3.30.54.20">
    <property type="match status" value="1"/>
</dbReference>
<dbReference type="Gene3D" id="6.10.250.550">
    <property type="match status" value="1"/>
</dbReference>
<dbReference type="Gene3D" id="3.30.930.10">
    <property type="entry name" value="Bira Bifunctional Protein, Domain 2"/>
    <property type="match status" value="1"/>
</dbReference>
<dbReference type="Gene3D" id="3.30.980.10">
    <property type="entry name" value="Threonyl-trna Synthetase, Chain A, domain 2"/>
    <property type="match status" value="1"/>
</dbReference>
<dbReference type="HAMAP" id="MF_00036_A">
    <property type="entry name" value="Ala_tRNA_synth_A"/>
    <property type="match status" value="1"/>
</dbReference>
<dbReference type="InterPro" id="IPR045864">
    <property type="entry name" value="aa-tRNA-synth_II/BPL/LPL"/>
</dbReference>
<dbReference type="InterPro" id="IPR002318">
    <property type="entry name" value="Ala-tRNA-lgiase_IIc"/>
</dbReference>
<dbReference type="InterPro" id="IPR018162">
    <property type="entry name" value="Ala-tRNA-ligase_IIc_anticod-bd"/>
</dbReference>
<dbReference type="InterPro" id="IPR018165">
    <property type="entry name" value="Ala-tRNA-synth_IIc_core"/>
</dbReference>
<dbReference type="InterPro" id="IPR018164">
    <property type="entry name" value="Ala-tRNA-synth_IIc_N"/>
</dbReference>
<dbReference type="InterPro" id="IPR022429">
    <property type="entry name" value="Ala-tRNA_lgiase_arc"/>
</dbReference>
<dbReference type="InterPro" id="IPR050058">
    <property type="entry name" value="Ala-tRNA_ligase"/>
</dbReference>
<dbReference type="InterPro" id="IPR003156">
    <property type="entry name" value="DHHA1_dom"/>
</dbReference>
<dbReference type="InterPro" id="IPR018163">
    <property type="entry name" value="Thr/Ala-tRNA-synth_IIc_edit"/>
</dbReference>
<dbReference type="InterPro" id="IPR009000">
    <property type="entry name" value="Transl_B-barrel_sf"/>
</dbReference>
<dbReference type="InterPro" id="IPR012947">
    <property type="entry name" value="tRNA_SAD"/>
</dbReference>
<dbReference type="NCBIfam" id="TIGR03683">
    <property type="entry name" value="A-tRNA_syn_arch"/>
    <property type="match status" value="1"/>
</dbReference>
<dbReference type="NCBIfam" id="TIGR00344">
    <property type="entry name" value="alaS"/>
    <property type="match status" value="1"/>
</dbReference>
<dbReference type="PANTHER" id="PTHR11777:SF9">
    <property type="entry name" value="ALANINE--TRNA LIGASE, CYTOPLASMIC"/>
    <property type="match status" value="1"/>
</dbReference>
<dbReference type="PANTHER" id="PTHR11777">
    <property type="entry name" value="ALANYL-TRNA SYNTHETASE"/>
    <property type="match status" value="1"/>
</dbReference>
<dbReference type="Pfam" id="PF02272">
    <property type="entry name" value="DHHA1"/>
    <property type="match status" value="1"/>
</dbReference>
<dbReference type="Pfam" id="PF01411">
    <property type="entry name" value="tRNA-synt_2c"/>
    <property type="match status" value="1"/>
</dbReference>
<dbReference type="Pfam" id="PF07973">
    <property type="entry name" value="tRNA_SAD"/>
    <property type="match status" value="1"/>
</dbReference>
<dbReference type="PRINTS" id="PR00980">
    <property type="entry name" value="TRNASYNTHALA"/>
</dbReference>
<dbReference type="SMART" id="SM00863">
    <property type="entry name" value="tRNA_SAD"/>
    <property type="match status" value="1"/>
</dbReference>
<dbReference type="SUPFAM" id="SSF55681">
    <property type="entry name" value="Class II aaRS and biotin synthetases"/>
    <property type="match status" value="1"/>
</dbReference>
<dbReference type="SUPFAM" id="SSF101353">
    <property type="entry name" value="Putative anticodon-binding domain of alanyl-tRNA synthetase (AlaRS)"/>
    <property type="match status" value="1"/>
</dbReference>
<dbReference type="SUPFAM" id="SSF55186">
    <property type="entry name" value="ThrRS/AlaRS common domain"/>
    <property type="match status" value="1"/>
</dbReference>
<dbReference type="SUPFAM" id="SSF50447">
    <property type="entry name" value="Translation proteins"/>
    <property type="match status" value="1"/>
</dbReference>
<dbReference type="PROSITE" id="PS50860">
    <property type="entry name" value="AA_TRNA_LIGASE_II_ALA"/>
    <property type="match status" value="1"/>
</dbReference>
<reference key="1">
    <citation type="journal article" date="1999" name="Genetics">
        <title>Divergence of the hyperthermophilic archaea Pyrococcus furiosus and P. horikoshii inferred from complete genomic sequences.</title>
        <authorList>
            <person name="Maeder D.L."/>
            <person name="Weiss R.B."/>
            <person name="Dunn D.M."/>
            <person name="Cherry J.L."/>
            <person name="Gonzalez J.M."/>
            <person name="DiRuggiero J."/>
            <person name="Robb F.T."/>
        </authorList>
    </citation>
    <scope>NUCLEOTIDE SEQUENCE [LARGE SCALE GENOMIC DNA]</scope>
    <source>
        <strain>ATCC 43587 / DSM 3638 / JCM 8422 / Vc1</strain>
    </source>
</reference>
<accession>Q8U425</accession>
<proteinExistence type="inferred from homology"/>